<proteinExistence type="inferred from homology"/>
<name>PANB_PECAS</name>
<evidence type="ECO:0000255" key="1">
    <source>
        <dbReference type="HAMAP-Rule" id="MF_00156"/>
    </source>
</evidence>
<feature type="chain" id="PRO_0000184845" description="3-methyl-2-oxobutanoate hydroxymethyltransferase">
    <location>
        <begin position="1"/>
        <end position="264"/>
    </location>
</feature>
<feature type="active site" description="Proton acceptor" evidence="1">
    <location>
        <position position="181"/>
    </location>
</feature>
<feature type="binding site" evidence="1">
    <location>
        <begin position="45"/>
        <end position="46"/>
    </location>
    <ligand>
        <name>3-methyl-2-oxobutanoate</name>
        <dbReference type="ChEBI" id="CHEBI:11851"/>
    </ligand>
</feature>
<feature type="binding site" evidence="1">
    <location>
        <position position="45"/>
    </location>
    <ligand>
        <name>Mg(2+)</name>
        <dbReference type="ChEBI" id="CHEBI:18420"/>
    </ligand>
</feature>
<feature type="binding site" evidence="1">
    <location>
        <position position="84"/>
    </location>
    <ligand>
        <name>3-methyl-2-oxobutanoate</name>
        <dbReference type="ChEBI" id="CHEBI:11851"/>
    </ligand>
</feature>
<feature type="binding site" evidence="1">
    <location>
        <position position="84"/>
    </location>
    <ligand>
        <name>Mg(2+)</name>
        <dbReference type="ChEBI" id="CHEBI:18420"/>
    </ligand>
</feature>
<feature type="binding site" evidence="1">
    <location>
        <position position="112"/>
    </location>
    <ligand>
        <name>3-methyl-2-oxobutanoate</name>
        <dbReference type="ChEBI" id="CHEBI:11851"/>
    </ligand>
</feature>
<feature type="binding site" evidence="1">
    <location>
        <position position="114"/>
    </location>
    <ligand>
        <name>Mg(2+)</name>
        <dbReference type="ChEBI" id="CHEBI:18420"/>
    </ligand>
</feature>
<accession>Q6D1X6</accession>
<dbReference type="EC" id="2.1.2.11" evidence="1"/>
<dbReference type="EMBL" id="BX950851">
    <property type="protein sequence ID" value="CAG76219.1"/>
    <property type="molecule type" value="Genomic_DNA"/>
</dbReference>
<dbReference type="RefSeq" id="WP_011094836.1">
    <property type="nucleotide sequence ID" value="NC_004547.2"/>
</dbReference>
<dbReference type="SMR" id="Q6D1X6"/>
<dbReference type="STRING" id="218491.ECA3321"/>
<dbReference type="GeneID" id="57210011"/>
<dbReference type="KEGG" id="eca:ECA3321"/>
<dbReference type="PATRIC" id="fig|218491.5.peg.3372"/>
<dbReference type="eggNOG" id="COG0413">
    <property type="taxonomic scope" value="Bacteria"/>
</dbReference>
<dbReference type="HOGENOM" id="CLU_036645_1_0_6"/>
<dbReference type="OrthoDB" id="9781789at2"/>
<dbReference type="UniPathway" id="UPA00028">
    <property type="reaction ID" value="UER00003"/>
</dbReference>
<dbReference type="Proteomes" id="UP000007966">
    <property type="component" value="Chromosome"/>
</dbReference>
<dbReference type="GO" id="GO:0005737">
    <property type="term" value="C:cytoplasm"/>
    <property type="evidence" value="ECO:0007669"/>
    <property type="project" value="UniProtKB-SubCell"/>
</dbReference>
<dbReference type="GO" id="GO:0003864">
    <property type="term" value="F:3-methyl-2-oxobutanoate hydroxymethyltransferase activity"/>
    <property type="evidence" value="ECO:0007669"/>
    <property type="project" value="UniProtKB-UniRule"/>
</dbReference>
<dbReference type="GO" id="GO:0000287">
    <property type="term" value="F:magnesium ion binding"/>
    <property type="evidence" value="ECO:0007669"/>
    <property type="project" value="TreeGrafter"/>
</dbReference>
<dbReference type="GO" id="GO:0015940">
    <property type="term" value="P:pantothenate biosynthetic process"/>
    <property type="evidence" value="ECO:0007669"/>
    <property type="project" value="UniProtKB-UniRule"/>
</dbReference>
<dbReference type="CDD" id="cd06557">
    <property type="entry name" value="KPHMT-like"/>
    <property type="match status" value="1"/>
</dbReference>
<dbReference type="FunFam" id="3.20.20.60:FF:000003">
    <property type="entry name" value="3-methyl-2-oxobutanoate hydroxymethyltransferase"/>
    <property type="match status" value="1"/>
</dbReference>
<dbReference type="Gene3D" id="3.20.20.60">
    <property type="entry name" value="Phosphoenolpyruvate-binding domains"/>
    <property type="match status" value="1"/>
</dbReference>
<dbReference type="HAMAP" id="MF_00156">
    <property type="entry name" value="PanB"/>
    <property type="match status" value="1"/>
</dbReference>
<dbReference type="InterPro" id="IPR003700">
    <property type="entry name" value="Pantoate_hydroxy_MeTrfase"/>
</dbReference>
<dbReference type="InterPro" id="IPR015813">
    <property type="entry name" value="Pyrv/PenolPyrv_kinase-like_dom"/>
</dbReference>
<dbReference type="InterPro" id="IPR040442">
    <property type="entry name" value="Pyrv_kinase-like_dom_sf"/>
</dbReference>
<dbReference type="NCBIfam" id="TIGR00222">
    <property type="entry name" value="panB"/>
    <property type="match status" value="1"/>
</dbReference>
<dbReference type="NCBIfam" id="NF001452">
    <property type="entry name" value="PRK00311.1"/>
    <property type="match status" value="1"/>
</dbReference>
<dbReference type="PANTHER" id="PTHR20881">
    <property type="entry name" value="3-METHYL-2-OXOBUTANOATE HYDROXYMETHYLTRANSFERASE"/>
    <property type="match status" value="1"/>
</dbReference>
<dbReference type="PANTHER" id="PTHR20881:SF0">
    <property type="entry name" value="3-METHYL-2-OXOBUTANOATE HYDROXYMETHYLTRANSFERASE"/>
    <property type="match status" value="1"/>
</dbReference>
<dbReference type="Pfam" id="PF02548">
    <property type="entry name" value="Pantoate_transf"/>
    <property type="match status" value="1"/>
</dbReference>
<dbReference type="PIRSF" id="PIRSF000388">
    <property type="entry name" value="Pantoate_hydroxy_MeTrfase"/>
    <property type="match status" value="1"/>
</dbReference>
<dbReference type="SUPFAM" id="SSF51621">
    <property type="entry name" value="Phosphoenolpyruvate/pyruvate domain"/>
    <property type="match status" value="1"/>
</dbReference>
<reference key="1">
    <citation type="journal article" date="2004" name="Proc. Natl. Acad. Sci. U.S.A.">
        <title>Genome sequence of the enterobacterial phytopathogen Erwinia carotovora subsp. atroseptica and characterization of virulence factors.</title>
        <authorList>
            <person name="Bell K.S."/>
            <person name="Sebaihia M."/>
            <person name="Pritchard L."/>
            <person name="Holden M.T.G."/>
            <person name="Hyman L.J."/>
            <person name="Holeva M.C."/>
            <person name="Thomson N.R."/>
            <person name="Bentley S.D."/>
            <person name="Churcher L.J.C."/>
            <person name="Mungall K."/>
            <person name="Atkin R."/>
            <person name="Bason N."/>
            <person name="Brooks K."/>
            <person name="Chillingworth T."/>
            <person name="Clark K."/>
            <person name="Doggett J."/>
            <person name="Fraser A."/>
            <person name="Hance Z."/>
            <person name="Hauser H."/>
            <person name="Jagels K."/>
            <person name="Moule S."/>
            <person name="Norbertczak H."/>
            <person name="Ormond D."/>
            <person name="Price C."/>
            <person name="Quail M.A."/>
            <person name="Sanders M."/>
            <person name="Walker D."/>
            <person name="Whitehead S."/>
            <person name="Salmond G.P.C."/>
            <person name="Birch P.R.J."/>
            <person name="Parkhill J."/>
            <person name="Toth I.K."/>
        </authorList>
    </citation>
    <scope>NUCLEOTIDE SEQUENCE [LARGE SCALE GENOMIC DNA]</scope>
    <source>
        <strain>SCRI 1043 / ATCC BAA-672</strain>
    </source>
</reference>
<comment type="function">
    <text evidence="1">Catalyzes the reversible reaction in which hydroxymethyl group from 5,10-methylenetetrahydrofolate is transferred onto alpha-ketoisovalerate to form ketopantoate.</text>
</comment>
<comment type="catalytic activity">
    <reaction evidence="1">
        <text>3-methyl-2-oxobutanoate + (6R)-5,10-methylene-5,6,7,8-tetrahydrofolate + H2O = 2-dehydropantoate + (6S)-5,6,7,8-tetrahydrofolate</text>
        <dbReference type="Rhea" id="RHEA:11824"/>
        <dbReference type="ChEBI" id="CHEBI:11561"/>
        <dbReference type="ChEBI" id="CHEBI:11851"/>
        <dbReference type="ChEBI" id="CHEBI:15377"/>
        <dbReference type="ChEBI" id="CHEBI:15636"/>
        <dbReference type="ChEBI" id="CHEBI:57453"/>
        <dbReference type="EC" id="2.1.2.11"/>
    </reaction>
</comment>
<comment type="cofactor">
    <cofactor evidence="1">
        <name>Mg(2+)</name>
        <dbReference type="ChEBI" id="CHEBI:18420"/>
    </cofactor>
    <text evidence="1">Binds 1 Mg(2+) ion per subunit.</text>
</comment>
<comment type="pathway">
    <text evidence="1">Cofactor biosynthesis; (R)-pantothenate biosynthesis; (R)-pantoate from 3-methyl-2-oxobutanoate: step 1/2.</text>
</comment>
<comment type="subunit">
    <text evidence="1">Homodecamer; pentamer of dimers.</text>
</comment>
<comment type="subcellular location">
    <subcellularLocation>
        <location evidence="1">Cytoplasm</location>
    </subcellularLocation>
</comment>
<comment type="similarity">
    <text evidence="1">Belongs to the PanB family.</text>
</comment>
<protein>
    <recommendedName>
        <fullName evidence="1">3-methyl-2-oxobutanoate hydroxymethyltransferase</fullName>
        <ecNumber evidence="1">2.1.2.11</ecNumber>
    </recommendedName>
    <alternativeName>
        <fullName evidence="1">Ketopantoate hydroxymethyltransferase</fullName>
        <shortName evidence="1">KPHMT</shortName>
    </alternativeName>
</protein>
<sequence length="264" mass="28643">MKPTTISHLRQWKQEQRKFATITAYDASFSRLFFEQGIRVMLVGDSLGMTVQGHDSTLPVTTHDIVYHTQCVRRGAPLALVLSDMPFMTYATPEQTFSQAAELMRAGANMVKLEGGSWLAPTVKMLTERAVPVCGHLGLTPQSVNIFGGYKIQGRSESDANQLLADALALEEAGAQLLVLECVPVALAKRVTEALSIPVIGIGAGNVTDGQILVMHDALGITGDSTPKFAKNFLAQSGDIRTAVRLYSQEVEQGIYPAEEHSFH</sequence>
<organism>
    <name type="scientific">Pectobacterium atrosepticum (strain SCRI 1043 / ATCC BAA-672)</name>
    <name type="common">Erwinia carotovora subsp. atroseptica</name>
    <dbReference type="NCBI Taxonomy" id="218491"/>
    <lineage>
        <taxon>Bacteria</taxon>
        <taxon>Pseudomonadati</taxon>
        <taxon>Pseudomonadota</taxon>
        <taxon>Gammaproteobacteria</taxon>
        <taxon>Enterobacterales</taxon>
        <taxon>Pectobacteriaceae</taxon>
        <taxon>Pectobacterium</taxon>
    </lineage>
</organism>
<keyword id="KW-0963">Cytoplasm</keyword>
<keyword id="KW-0460">Magnesium</keyword>
<keyword id="KW-0479">Metal-binding</keyword>
<keyword id="KW-0566">Pantothenate biosynthesis</keyword>
<keyword id="KW-1185">Reference proteome</keyword>
<keyword id="KW-0808">Transferase</keyword>
<gene>
    <name evidence="1" type="primary">panB</name>
    <name type="ordered locus">ECA3321</name>
</gene>